<gene>
    <name evidence="1" type="primary">ackA</name>
    <name type="ordered locus">LSEI_0166</name>
</gene>
<evidence type="ECO:0000255" key="1">
    <source>
        <dbReference type="HAMAP-Rule" id="MF_00020"/>
    </source>
</evidence>
<name>ACKA_LACP3</name>
<proteinExistence type="inferred from homology"/>
<reference key="1">
    <citation type="journal article" date="2006" name="Proc. Natl. Acad. Sci. U.S.A.">
        <title>Comparative genomics of the lactic acid bacteria.</title>
        <authorList>
            <person name="Makarova K.S."/>
            <person name="Slesarev A."/>
            <person name="Wolf Y.I."/>
            <person name="Sorokin A."/>
            <person name="Mirkin B."/>
            <person name="Koonin E.V."/>
            <person name="Pavlov A."/>
            <person name="Pavlova N."/>
            <person name="Karamychev V."/>
            <person name="Polouchine N."/>
            <person name="Shakhova V."/>
            <person name="Grigoriev I."/>
            <person name="Lou Y."/>
            <person name="Rohksar D."/>
            <person name="Lucas S."/>
            <person name="Huang K."/>
            <person name="Goodstein D.M."/>
            <person name="Hawkins T."/>
            <person name="Plengvidhya V."/>
            <person name="Welker D."/>
            <person name="Hughes J."/>
            <person name="Goh Y."/>
            <person name="Benson A."/>
            <person name="Baldwin K."/>
            <person name="Lee J.-H."/>
            <person name="Diaz-Muniz I."/>
            <person name="Dosti B."/>
            <person name="Smeianov V."/>
            <person name="Wechter W."/>
            <person name="Barabote R."/>
            <person name="Lorca G."/>
            <person name="Altermann E."/>
            <person name="Barrangou R."/>
            <person name="Ganesan B."/>
            <person name="Xie Y."/>
            <person name="Rawsthorne H."/>
            <person name="Tamir D."/>
            <person name="Parker C."/>
            <person name="Breidt F."/>
            <person name="Broadbent J.R."/>
            <person name="Hutkins R."/>
            <person name="O'Sullivan D."/>
            <person name="Steele J."/>
            <person name="Unlu G."/>
            <person name="Saier M.H. Jr."/>
            <person name="Klaenhammer T."/>
            <person name="Richardson P."/>
            <person name="Kozyavkin S."/>
            <person name="Weimer B.C."/>
            <person name="Mills D.A."/>
        </authorList>
    </citation>
    <scope>NUCLEOTIDE SEQUENCE [LARGE SCALE GENOMIC DNA]</scope>
    <source>
        <strain>ATCC 334 / BCRC 17002 / CCUG 31169 / CIP 107868 / KCTC 3260 / NRRL B-441</strain>
    </source>
</reference>
<keyword id="KW-0067">ATP-binding</keyword>
<keyword id="KW-0963">Cytoplasm</keyword>
<keyword id="KW-0418">Kinase</keyword>
<keyword id="KW-0460">Magnesium</keyword>
<keyword id="KW-0479">Metal-binding</keyword>
<keyword id="KW-0547">Nucleotide-binding</keyword>
<keyword id="KW-1185">Reference proteome</keyword>
<keyword id="KW-0808">Transferase</keyword>
<protein>
    <recommendedName>
        <fullName evidence="1">Acetate kinase</fullName>
        <ecNumber evidence="1">2.7.2.1</ecNumber>
    </recommendedName>
    <alternativeName>
        <fullName evidence="1">Acetokinase</fullName>
    </alternativeName>
</protein>
<dbReference type="EC" id="2.7.2.1" evidence="1"/>
<dbReference type="EMBL" id="CP000423">
    <property type="protein sequence ID" value="ABJ69030.1"/>
    <property type="molecule type" value="Genomic_DNA"/>
</dbReference>
<dbReference type="RefSeq" id="WP_003562823.1">
    <property type="nucleotide sequence ID" value="NC_008526.1"/>
</dbReference>
<dbReference type="RefSeq" id="YP_805472.1">
    <property type="nucleotide sequence ID" value="NC_008526.1"/>
</dbReference>
<dbReference type="SMR" id="Q03CP2"/>
<dbReference type="STRING" id="321967.LSEI_0166"/>
<dbReference type="PaxDb" id="321967-LSEI_0166"/>
<dbReference type="KEGG" id="lca:LSEI_0166"/>
<dbReference type="PATRIC" id="fig|321967.11.peg.191"/>
<dbReference type="HOGENOM" id="CLU_020352_0_1_9"/>
<dbReference type="UniPathway" id="UPA00340">
    <property type="reaction ID" value="UER00458"/>
</dbReference>
<dbReference type="Proteomes" id="UP000001651">
    <property type="component" value="Chromosome"/>
</dbReference>
<dbReference type="GO" id="GO:0005737">
    <property type="term" value="C:cytoplasm"/>
    <property type="evidence" value="ECO:0007669"/>
    <property type="project" value="UniProtKB-SubCell"/>
</dbReference>
<dbReference type="GO" id="GO:0008776">
    <property type="term" value="F:acetate kinase activity"/>
    <property type="evidence" value="ECO:0007669"/>
    <property type="project" value="UniProtKB-UniRule"/>
</dbReference>
<dbReference type="GO" id="GO:0005524">
    <property type="term" value="F:ATP binding"/>
    <property type="evidence" value="ECO:0007669"/>
    <property type="project" value="UniProtKB-KW"/>
</dbReference>
<dbReference type="GO" id="GO:0000287">
    <property type="term" value="F:magnesium ion binding"/>
    <property type="evidence" value="ECO:0007669"/>
    <property type="project" value="UniProtKB-UniRule"/>
</dbReference>
<dbReference type="GO" id="GO:0006083">
    <property type="term" value="P:acetate metabolic process"/>
    <property type="evidence" value="ECO:0007669"/>
    <property type="project" value="TreeGrafter"/>
</dbReference>
<dbReference type="GO" id="GO:0006085">
    <property type="term" value="P:acetyl-CoA biosynthetic process"/>
    <property type="evidence" value="ECO:0007669"/>
    <property type="project" value="UniProtKB-UniRule"/>
</dbReference>
<dbReference type="CDD" id="cd24010">
    <property type="entry name" value="ASKHA_NBD_AcK_PK"/>
    <property type="match status" value="1"/>
</dbReference>
<dbReference type="Gene3D" id="3.30.420.40">
    <property type="match status" value="2"/>
</dbReference>
<dbReference type="HAMAP" id="MF_00020">
    <property type="entry name" value="Acetate_kinase"/>
    <property type="match status" value="1"/>
</dbReference>
<dbReference type="InterPro" id="IPR004372">
    <property type="entry name" value="Ac/propionate_kinase"/>
</dbReference>
<dbReference type="InterPro" id="IPR000890">
    <property type="entry name" value="Aliphatic_acid_kin_short-chain"/>
</dbReference>
<dbReference type="InterPro" id="IPR023865">
    <property type="entry name" value="Aliphatic_acid_kinase_CS"/>
</dbReference>
<dbReference type="InterPro" id="IPR043129">
    <property type="entry name" value="ATPase_NBD"/>
</dbReference>
<dbReference type="NCBIfam" id="TIGR00016">
    <property type="entry name" value="ackA"/>
    <property type="match status" value="1"/>
</dbReference>
<dbReference type="PANTHER" id="PTHR21060">
    <property type="entry name" value="ACETATE KINASE"/>
    <property type="match status" value="1"/>
</dbReference>
<dbReference type="PANTHER" id="PTHR21060:SF15">
    <property type="entry name" value="ACETATE KINASE-RELATED"/>
    <property type="match status" value="1"/>
</dbReference>
<dbReference type="Pfam" id="PF00871">
    <property type="entry name" value="Acetate_kinase"/>
    <property type="match status" value="1"/>
</dbReference>
<dbReference type="PIRSF" id="PIRSF000722">
    <property type="entry name" value="Acetate_prop_kin"/>
    <property type="match status" value="1"/>
</dbReference>
<dbReference type="PRINTS" id="PR00471">
    <property type="entry name" value="ACETATEKNASE"/>
</dbReference>
<dbReference type="SUPFAM" id="SSF53067">
    <property type="entry name" value="Actin-like ATPase domain"/>
    <property type="match status" value="2"/>
</dbReference>
<dbReference type="PROSITE" id="PS01075">
    <property type="entry name" value="ACETATE_KINASE_1"/>
    <property type="match status" value="1"/>
</dbReference>
<dbReference type="PROSITE" id="PS01076">
    <property type="entry name" value="ACETATE_KINASE_2"/>
    <property type="match status" value="1"/>
</dbReference>
<feature type="chain" id="PRO_1000002238" description="Acetate kinase">
    <location>
        <begin position="1"/>
        <end position="396"/>
    </location>
</feature>
<feature type="active site" description="Proton donor/acceptor" evidence="1">
    <location>
        <position position="147"/>
    </location>
</feature>
<feature type="binding site" evidence="1">
    <location>
        <position position="8"/>
    </location>
    <ligand>
        <name>Mg(2+)</name>
        <dbReference type="ChEBI" id="CHEBI:18420"/>
    </ligand>
</feature>
<feature type="binding site" evidence="1">
    <location>
        <position position="15"/>
    </location>
    <ligand>
        <name>ATP</name>
        <dbReference type="ChEBI" id="CHEBI:30616"/>
    </ligand>
</feature>
<feature type="binding site" evidence="1">
    <location>
        <position position="90"/>
    </location>
    <ligand>
        <name>substrate</name>
    </ligand>
</feature>
<feature type="binding site" evidence="1">
    <location>
        <begin position="207"/>
        <end position="211"/>
    </location>
    <ligand>
        <name>ATP</name>
        <dbReference type="ChEBI" id="CHEBI:30616"/>
    </ligand>
</feature>
<feature type="binding site" evidence="1">
    <location>
        <begin position="283"/>
        <end position="285"/>
    </location>
    <ligand>
        <name>ATP</name>
        <dbReference type="ChEBI" id="CHEBI:30616"/>
    </ligand>
</feature>
<feature type="binding site" evidence="1">
    <location>
        <begin position="330"/>
        <end position="334"/>
    </location>
    <ligand>
        <name>ATP</name>
        <dbReference type="ChEBI" id="CHEBI:30616"/>
    </ligand>
</feature>
<feature type="binding site" evidence="1">
    <location>
        <position position="384"/>
    </location>
    <ligand>
        <name>Mg(2+)</name>
        <dbReference type="ChEBI" id="CHEBI:18420"/>
    </ligand>
</feature>
<feature type="site" description="Transition state stabilizer" evidence="1">
    <location>
        <position position="179"/>
    </location>
</feature>
<feature type="site" description="Transition state stabilizer" evidence="1">
    <location>
        <position position="240"/>
    </location>
</feature>
<sequence>MAKILAVNAGSSTLKWKLFDMPAEVQLAEGLVDRLGQPQSKVKIKYGDGQKYESDTPIANYQEAVASLMGNIKALGLVEHLHEITGVGHRVVAGGETFAESVVVDDATLLQIQNLRDYAPLHNPVEADYIDVFKKMMPWATEVAVFDTAFHQTMQPENFLYSIPYDYYKKYGARKYGAHGTSVRYVSARAAEMLNKPLEDLRMIVMHLGSGSSVTAVQGGQSIDTSMGFTPLAGVTMGTRSGDIDPSLVAYLMKKLDVPDVGQMIHILNNDSGLLGISGISNDMRDLEADEDTKPRAKLALDIFVNRVVKYVGSYAALMDGVDVLVFTAGIGENGDEIRDKIMRSLDYLGAKIDNDINYKSHGVEADLSTPDSTVKTLLVPTNEELMIVRDVMALS</sequence>
<comment type="function">
    <text evidence="1">Catalyzes the formation of acetyl phosphate from acetate and ATP. Can also catalyze the reverse reaction.</text>
</comment>
<comment type="catalytic activity">
    <reaction evidence="1">
        <text>acetate + ATP = acetyl phosphate + ADP</text>
        <dbReference type="Rhea" id="RHEA:11352"/>
        <dbReference type="ChEBI" id="CHEBI:22191"/>
        <dbReference type="ChEBI" id="CHEBI:30089"/>
        <dbReference type="ChEBI" id="CHEBI:30616"/>
        <dbReference type="ChEBI" id="CHEBI:456216"/>
        <dbReference type="EC" id="2.7.2.1"/>
    </reaction>
</comment>
<comment type="cofactor">
    <cofactor evidence="1">
        <name>Mg(2+)</name>
        <dbReference type="ChEBI" id="CHEBI:18420"/>
    </cofactor>
    <cofactor evidence="1">
        <name>Mn(2+)</name>
        <dbReference type="ChEBI" id="CHEBI:29035"/>
    </cofactor>
    <text evidence="1">Mg(2+). Can also accept Mn(2+).</text>
</comment>
<comment type="pathway">
    <text evidence="1">Metabolic intermediate biosynthesis; acetyl-CoA biosynthesis; acetyl-CoA from acetate: step 1/2.</text>
</comment>
<comment type="subunit">
    <text evidence="1">Homodimer.</text>
</comment>
<comment type="subcellular location">
    <subcellularLocation>
        <location evidence="1">Cytoplasm</location>
    </subcellularLocation>
</comment>
<comment type="similarity">
    <text evidence="1">Belongs to the acetokinase family.</text>
</comment>
<organism>
    <name type="scientific">Lacticaseibacillus paracasei (strain ATCC 334 / BCRC 17002 / CCUG 31169 / CIP 107868 / KCTC 3260 / NRRL B-441)</name>
    <name type="common">Lactobacillus paracasei</name>
    <dbReference type="NCBI Taxonomy" id="321967"/>
    <lineage>
        <taxon>Bacteria</taxon>
        <taxon>Bacillati</taxon>
        <taxon>Bacillota</taxon>
        <taxon>Bacilli</taxon>
        <taxon>Lactobacillales</taxon>
        <taxon>Lactobacillaceae</taxon>
        <taxon>Lacticaseibacillus</taxon>
    </lineage>
</organism>
<accession>Q03CP2</accession>